<reference key="1">
    <citation type="journal article" date="2001" name="Nature">
        <title>Genome sequence of Yersinia pestis, the causative agent of plague.</title>
        <authorList>
            <person name="Parkhill J."/>
            <person name="Wren B.W."/>
            <person name="Thomson N.R."/>
            <person name="Titball R.W."/>
            <person name="Holden M.T.G."/>
            <person name="Prentice M.B."/>
            <person name="Sebaihia M."/>
            <person name="James K.D."/>
            <person name="Churcher C.M."/>
            <person name="Mungall K.L."/>
            <person name="Baker S."/>
            <person name="Basham D."/>
            <person name="Bentley S.D."/>
            <person name="Brooks K."/>
            <person name="Cerdeno-Tarraga A.-M."/>
            <person name="Chillingworth T."/>
            <person name="Cronin A."/>
            <person name="Davies R.M."/>
            <person name="Davis P."/>
            <person name="Dougan G."/>
            <person name="Feltwell T."/>
            <person name="Hamlin N."/>
            <person name="Holroyd S."/>
            <person name="Jagels K."/>
            <person name="Karlyshev A.V."/>
            <person name="Leather S."/>
            <person name="Moule S."/>
            <person name="Oyston P.C.F."/>
            <person name="Quail M.A."/>
            <person name="Rutherford K.M."/>
            <person name="Simmonds M."/>
            <person name="Skelton J."/>
            <person name="Stevens K."/>
            <person name="Whitehead S."/>
            <person name="Barrell B.G."/>
        </authorList>
    </citation>
    <scope>NUCLEOTIDE SEQUENCE [LARGE SCALE GENOMIC DNA]</scope>
    <source>
        <strain>CO-92 / Biovar Orientalis</strain>
    </source>
</reference>
<reference key="2">
    <citation type="journal article" date="2002" name="J. Bacteriol.">
        <title>Genome sequence of Yersinia pestis KIM.</title>
        <authorList>
            <person name="Deng W."/>
            <person name="Burland V."/>
            <person name="Plunkett G. III"/>
            <person name="Boutin A."/>
            <person name="Mayhew G.F."/>
            <person name="Liss P."/>
            <person name="Perna N.T."/>
            <person name="Rose D.J."/>
            <person name="Mau B."/>
            <person name="Zhou S."/>
            <person name="Schwartz D.C."/>
            <person name="Fetherston J.D."/>
            <person name="Lindler L.E."/>
            <person name="Brubaker R.R."/>
            <person name="Plano G.V."/>
            <person name="Straley S.C."/>
            <person name="McDonough K.A."/>
            <person name="Nilles M.L."/>
            <person name="Matson J.S."/>
            <person name="Blattner F.R."/>
            <person name="Perry R.D."/>
        </authorList>
    </citation>
    <scope>NUCLEOTIDE SEQUENCE [LARGE SCALE GENOMIC DNA]</scope>
    <source>
        <strain>KIM10+ / Biovar Mediaevalis</strain>
    </source>
</reference>
<reference key="3">
    <citation type="journal article" date="2004" name="DNA Res.">
        <title>Complete genome sequence of Yersinia pestis strain 91001, an isolate avirulent to humans.</title>
        <authorList>
            <person name="Song Y."/>
            <person name="Tong Z."/>
            <person name="Wang J."/>
            <person name="Wang L."/>
            <person name="Guo Z."/>
            <person name="Han Y."/>
            <person name="Zhang J."/>
            <person name="Pei D."/>
            <person name="Zhou D."/>
            <person name="Qin H."/>
            <person name="Pang X."/>
            <person name="Han Y."/>
            <person name="Zhai J."/>
            <person name="Li M."/>
            <person name="Cui B."/>
            <person name="Qi Z."/>
            <person name="Jin L."/>
            <person name="Dai R."/>
            <person name="Chen F."/>
            <person name="Li S."/>
            <person name="Ye C."/>
            <person name="Du Z."/>
            <person name="Lin W."/>
            <person name="Wang J."/>
            <person name="Yu J."/>
            <person name="Yang H."/>
            <person name="Wang J."/>
            <person name="Huang P."/>
            <person name="Yang R."/>
        </authorList>
    </citation>
    <scope>NUCLEOTIDE SEQUENCE [LARGE SCALE GENOMIC DNA]</scope>
    <source>
        <strain>91001 / Biovar Mediaevalis</strain>
    </source>
</reference>
<organism>
    <name type="scientific">Yersinia pestis</name>
    <dbReference type="NCBI Taxonomy" id="632"/>
    <lineage>
        <taxon>Bacteria</taxon>
        <taxon>Pseudomonadati</taxon>
        <taxon>Pseudomonadota</taxon>
        <taxon>Gammaproteobacteria</taxon>
        <taxon>Enterobacterales</taxon>
        <taxon>Yersiniaceae</taxon>
        <taxon>Yersinia</taxon>
    </lineage>
</organism>
<dbReference type="EC" id="4.1.1.98" evidence="1"/>
<dbReference type="EMBL" id="AL590842">
    <property type="protein sequence ID" value="CAL22356.1"/>
    <property type="molecule type" value="Genomic_DNA"/>
</dbReference>
<dbReference type="EMBL" id="AE009952">
    <property type="protein sequence ID" value="AAM84050.1"/>
    <property type="molecule type" value="Genomic_DNA"/>
</dbReference>
<dbReference type="EMBL" id="AE017042">
    <property type="protein sequence ID" value="AAS63446.1"/>
    <property type="molecule type" value="Genomic_DNA"/>
</dbReference>
<dbReference type="PIR" id="AI0458">
    <property type="entry name" value="AI0458"/>
</dbReference>
<dbReference type="RefSeq" id="WP_002215917.1">
    <property type="nucleotide sequence ID" value="NZ_WUCM01000112.1"/>
</dbReference>
<dbReference type="RefSeq" id="YP_002348648.1">
    <property type="nucleotide sequence ID" value="NC_003143.1"/>
</dbReference>
<dbReference type="SMR" id="Q0WAP0"/>
<dbReference type="IntAct" id="Q0WAP0">
    <property type="interactions" value="3"/>
</dbReference>
<dbReference type="STRING" id="214092.YPO3769"/>
<dbReference type="PaxDb" id="214092-YPO3769"/>
<dbReference type="EnsemblBacteria" id="AAS63446">
    <property type="protein sequence ID" value="AAS63446"/>
    <property type="gene ID" value="YP_3279"/>
</dbReference>
<dbReference type="GeneID" id="57974939"/>
<dbReference type="KEGG" id="ype:YPO3769"/>
<dbReference type="KEGG" id="ypj:CH55_3247"/>
<dbReference type="KEGG" id="ypk:y0461"/>
<dbReference type="KEGG" id="ypl:CH46_1297"/>
<dbReference type="KEGG" id="ypm:YP_3279"/>
<dbReference type="KEGG" id="ypv:BZ15_3947"/>
<dbReference type="KEGG" id="ypw:CH59_1703"/>
<dbReference type="PATRIC" id="fig|214092.21.peg.4291"/>
<dbReference type="eggNOG" id="COG0043">
    <property type="taxonomic scope" value="Bacteria"/>
</dbReference>
<dbReference type="HOGENOM" id="CLU_023348_4_1_6"/>
<dbReference type="OMA" id="DWKDVIW"/>
<dbReference type="OrthoDB" id="9809841at2"/>
<dbReference type="UniPathway" id="UPA00232"/>
<dbReference type="Proteomes" id="UP000000815">
    <property type="component" value="Chromosome"/>
</dbReference>
<dbReference type="Proteomes" id="UP000001019">
    <property type="component" value="Chromosome"/>
</dbReference>
<dbReference type="Proteomes" id="UP000002490">
    <property type="component" value="Chromosome"/>
</dbReference>
<dbReference type="GO" id="GO:0005737">
    <property type="term" value="C:cytoplasm"/>
    <property type="evidence" value="ECO:0000318"/>
    <property type="project" value="GO_Central"/>
</dbReference>
<dbReference type="GO" id="GO:0005829">
    <property type="term" value="C:cytosol"/>
    <property type="evidence" value="ECO:0000318"/>
    <property type="project" value="GO_Central"/>
</dbReference>
<dbReference type="GO" id="GO:0005886">
    <property type="term" value="C:plasma membrane"/>
    <property type="evidence" value="ECO:0007669"/>
    <property type="project" value="UniProtKB-SubCell"/>
</dbReference>
<dbReference type="GO" id="GO:0008694">
    <property type="term" value="F:3-octaprenyl-4-hydroxybenzoate carboxy-lyase activity"/>
    <property type="evidence" value="ECO:0000318"/>
    <property type="project" value="GO_Central"/>
</dbReference>
<dbReference type="GO" id="GO:0046872">
    <property type="term" value="F:metal ion binding"/>
    <property type="evidence" value="ECO:0007669"/>
    <property type="project" value="UniProtKB-KW"/>
</dbReference>
<dbReference type="GO" id="GO:0006744">
    <property type="term" value="P:ubiquinone biosynthetic process"/>
    <property type="evidence" value="ECO:0000318"/>
    <property type="project" value="GO_Central"/>
</dbReference>
<dbReference type="FunFam" id="1.20.5.570:FF:000001">
    <property type="entry name" value="3-octaprenyl-4-hydroxybenzoate carboxy-lyase"/>
    <property type="match status" value="1"/>
</dbReference>
<dbReference type="FunFam" id="3.40.1670.10:FF:000001">
    <property type="entry name" value="3-octaprenyl-4-hydroxybenzoate carboxy-lyase"/>
    <property type="match status" value="1"/>
</dbReference>
<dbReference type="Gene3D" id="1.20.5.570">
    <property type="entry name" value="Single helix bin"/>
    <property type="match status" value="1"/>
</dbReference>
<dbReference type="Gene3D" id="3.40.1670.10">
    <property type="entry name" value="UbiD C-terminal domain-like"/>
    <property type="match status" value="1"/>
</dbReference>
<dbReference type="HAMAP" id="MF_01636">
    <property type="entry name" value="UbiD"/>
    <property type="match status" value="1"/>
</dbReference>
<dbReference type="InterPro" id="IPR002830">
    <property type="entry name" value="UbiD"/>
</dbReference>
<dbReference type="InterPro" id="IPR049381">
    <property type="entry name" value="UbiD-like_C"/>
</dbReference>
<dbReference type="InterPro" id="IPR049383">
    <property type="entry name" value="UbiD-like_N"/>
</dbReference>
<dbReference type="InterPro" id="IPR023677">
    <property type="entry name" value="UbiD_bacteria"/>
</dbReference>
<dbReference type="InterPro" id="IPR048304">
    <property type="entry name" value="UbiD_Rift_dom"/>
</dbReference>
<dbReference type="NCBIfam" id="NF008175">
    <property type="entry name" value="PRK10922.1"/>
    <property type="match status" value="1"/>
</dbReference>
<dbReference type="NCBIfam" id="TIGR00148">
    <property type="entry name" value="UbiD family decarboxylase"/>
    <property type="match status" value="1"/>
</dbReference>
<dbReference type="PANTHER" id="PTHR30108">
    <property type="entry name" value="3-OCTAPRENYL-4-HYDROXYBENZOATE CARBOXY-LYASE-RELATED"/>
    <property type="match status" value="1"/>
</dbReference>
<dbReference type="PANTHER" id="PTHR30108:SF17">
    <property type="entry name" value="FERULIC ACID DECARBOXYLASE 1"/>
    <property type="match status" value="1"/>
</dbReference>
<dbReference type="Pfam" id="PF01977">
    <property type="entry name" value="UbiD"/>
    <property type="match status" value="1"/>
</dbReference>
<dbReference type="Pfam" id="PF20696">
    <property type="entry name" value="UbiD_C"/>
    <property type="match status" value="1"/>
</dbReference>
<dbReference type="Pfam" id="PF20695">
    <property type="entry name" value="UbiD_N"/>
    <property type="match status" value="1"/>
</dbReference>
<dbReference type="SUPFAM" id="SSF50475">
    <property type="entry name" value="FMN-binding split barrel"/>
    <property type="match status" value="1"/>
</dbReference>
<dbReference type="SUPFAM" id="SSF143968">
    <property type="entry name" value="UbiD C-terminal domain-like"/>
    <property type="match status" value="1"/>
</dbReference>
<keyword id="KW-1003">Cell membrane</keyword>
<keyword id="KW-0210">Decarboxylase</keyword>
<keyword id="KW-0285">Flavoprotein</keyword>
<keyword id="KW-0288">FMN</keyword>
<keyword id="KW-0456">Lyase</keyword>
<keyword id="KW-0464">Manganese</keyword>
<keyword id="KW-0472">Membrane</keyword>
<keyword id="KW-0479">Metal-binding</keyword>
<keyword id="KW-1185">Reference proteome</keyword>
<keyword id="KW-0831">Ubiquinone biosynthesis</keyword>
<name>UBID_YERPE</name>
<comment type="function">
    <text evidence="1">Catalyzes the decarboxylation of 3-octaprenyl-4-hydroxy benzoate to 2-octaprenylphenol, an intermediate step in ubiquinone biosynthesis.</text>
</comment>
<comment type="catalytic activity">
    <reaction evidence="1">
        <text>a 4-hydroxy-3-(all-trans-polyprenyl)benzoate + H(+) = a 2-(all-trans-polyprenyl)phenol + CO2</text>
        <dbReference type="Rhea" id="RHEA:41680"/>
        <dbReference type="Rhea" id="RHEA-COMP:9514"/>
        <dbReference type="Rhea" id="RHEA-COMP:9516"/>
        <dbReference type="ChEBI" id="CHEBI:1269"/>
        <dbReference type="ChEBI" id="CHEBI:15378"/>
        <dbReference type="ChEBI" id="CHEBI:16526"/>
        <dbReference type="ChEBI" id="CHEBI:78396"/>
        <dbReference type="EC" id="4.1.1.98"/>
    </reaction>
</comment>
<comment type="cofactor">
    <cofactor evidence="1">
        <name>prenylated FMN</name>
        <dbReference type="ChEBI" id="CHEBI:87746"/>
    </cofactor>
    <text evidence="1">Binds 1 prenylated FMN per subunit.</text>
</comment>
<comment type="cofactor">
    <cofactor evidence="1">
        <name>Mn(2+)</name>
        <dbReference type="ChEBI" id="CHEBI:29035"/>
    </cofactor>
</comment>
<comment type="pathway">
    <text evidence="1">Cofactor biosynthesis; ubiquinone biosynthesis.</text>
</comment>
<comment type="subunit">
    <text evidence="1">Homohexamer.</text>
</comment>
<comment type="subcellular location">
    <subcellularLocation>
        <location evidence="1">Cell membrane</location>
        <topology evidence="1">Peripheral membrane protein</topology>
    </subcellularLocation>
</comment>
<comment type="similarity">
    <text evidence="1">Belongs to the UbiD family.</text>
</comment>
<accession>Q0WAP0</accession>
<accession>Q74R13</accession>
<accession>Q8D1H9</accession>
<gene>
    <name evidence="1" type="primary">ubiD</name>
    <name type="ordered locus">YPO3769</name>
    <name type="ordered locus">y0461</name>
    <name type="ordered locus">YP_3279</name>
</gene>
<evidence type="ECO:0000255" key="1">
    <source>
        <dbReference type="HAMAP-Rule" id="MF_01636"/>
    </source>
</evidence>
<protein>
    <recommendedName>
        <fullName evidence="1">3-octaprenyl-4-hydroxybenzoate carboxy-lyase</fullName>
        <ecNumber evidence="1">4.1.1.98</ecNumber>
    </recommendedName>
    <alternativeName>
        <fullName evidence="1">Polyprenyl p-hydroxybenzoate decarboxylase</fullName>
    </alternativeName>
</protein>
<sequence>MISMKYRDLRDFLSLLEQRGELKRISQPIDPYLEMTEIADRTLRAGGPALLFENPKGYSMPVLCNLFGTAKRVAMGMGQEDVSALRDVGKLLAFLKEPDPPKGFRDLFDKLPKFKQVLNMPTKRLNSAPCQEQVWQGEDVDLSRIPVMHCWPEDAAPLVSWGLTITRGPHKERQNLGIYRQQVLGKNKLIMRWLSHRGGALDYQEWCEAHPGERFPVAVALGADPATILAAVTPVPDTLSEYAFAGLLRGHKTEVVKCLSNDLEVPASAEIVLEGYIEQGDMAPEGPYGDHTGYYNEIDNFPVFTVTHITQRQDAIYHSTYTGRPPDEPAVMGVALNEVFVPILQKQFPEIVDFYLPPEGCSYRLAVVTIKKQYAGHAKRVMMGIWSFLRQFMYTKFVIVCDDDINARDWNDVIWAITTRMDPSRDTVLIENTPIDYLDFASPVSGLGSKMGLDATNKWPAETPREWGRPIKMDEDVRARIDALWDELAIFSDKDAKR</sequence>
<proteinExistence type="inferred from homology"/>
<feature type="chain" id="PRO_0000267710" description="3-octaprenyl-4-hydroxybenzoate carboxy-lyase">
    <location>
        <begin position="1"/>
        <end position="498"/>
    </location>
</feature>
<feature type="active site" description="Proton donor" evidence="1">
    <location>
        <position position="290"/>
    </location>
</feature>
<feature type="binding site" evidence="1">
    <location>
        <position position="175"/>
    </location>
    <ligand>
        <name>Mn(2+)</name>
        <dbReference type="ChEBI" id="CHEBI:29035"/>
    </ligand>
</feature>
<feature type="binding site" evidence="1">
    <location>
        <begin position="178"/>
        <end position="180"/>
    </location>
    <ligand>
        <name>prenylated FMN</name>
        <dbReference type="ChEBI" id="CHEBI:87746"/>
    </ligand>
</feature>
<feature type="binding site" evidence="1">
    <location>
        <begin position="192"/>
        <end position="194"/>
    </location>
    <ligand>
        <name>prenylated FMN</name>
        <dbReference type="ChEBI" id="CHEBI:87746"/>
    </ligand>
</feature>
<feature type="binding site" evidence="1">
    <location>
        <begin position="197"/>
        <end position="198"/>
    </location>
    <ligand>
        <name>prenylated FMN</name>
        <dbReference type="ChEBI" id="CHEBI:87746"/>
    </ligand>
</feature>
<feature type="binding site" evidence="1">
    <location>
        <position position="241"/>
    </location>
    <ligand>
        <name>Mn(2+)</name>
        <dbReference type="ChEBI" id="CHEBI:29035"/>
    </ligand>
</feature>